<dbReference type="EMBL" id="AB065755">
    <property type="protein sequence ID" value="BAC05975.1"/>
    <property type="molecule type" value="Genomic_DNA"/>
</dbReference>
<dbReference type="EMBL" id="CH471065">
    <property type="protein sequence ID" value="EAW67567.1"/>
    <property type="molecule type" value="Genomic_DNA"/>
</dbReference>
<dbReference type="EMBL" id="BC136917">
    <property type="protein sequence ID" value="AAI36918.1"/>
    <property type="molecule type" value="mRNA"/>
</dbReference>
<dbReference type="EMBL" id="BC136920">
    <property type="protein sequence ID" value="AAI36921.1"/>
    <property type="molecule type" value="mRNA"/>
</dbReference>
<dbReference type="EMBL" id="BK004510">
    <property type="protein sequence ID" value="DAA04908.1"/>
    <property type="molecule type" value="Genomic_DNA"/>
</dbReference>
<dbReference type="CCDS" id="CCDS31704.1"/>
<dbReference type="RefSeq" id="NP_001004464.1">
    <property type="nucleotide sequence ID" value="NM_001004464.2"/>
</dbReference>
<dbReference type="SMR" id="Q8NGN5"/>
<dbReference type="BioGRID" id="128587">
    <property type="interactions" value="16"/>
</dbReference>
<dbReference type="FunCoup" id="Q8NGN5">
    <property type="interactions" value="451"/>
</dbReference>
<dbReference type="STRING" id="9606.ENSP00000389072"/>
<dbReference type="GlyCosmos" id="Q8NGN5">
    <property type="glycosylation" value="1 site, No reported glycans"/>
</dbReference>
<dbReference type="GlyGen" id="Q8NGN5">
    <property type="glycosylation" value="2 sites"/>
</dbReference>
<dbReference type="iPTMnet" id="Q8NGN5"/>
<dbReference type="PhosphoSitePlus" id="Q8NGN5"/>
<dbReference type="BioMuta" id="OR10G8"/>
<dbReference type="DMDM" id="38372735"/>
<dbReference type="MassIVE" id="Q8NGN5"/>
<dbReference type="PaxDb" id="9606-ENSP00000389072"/>
<dbReference type="PeptideAtlas" id="Q8NGN5"/>
<dbReference type="Antibodypedia" id="67320">
    <property type="antibodies" value="60 antibodies from 16 providers"/>
</dbReference>
<dbReference type="DNASU" id="219869"/>
<dbReference type="Ensembl" id="ENST00000431524.1">
    <property type="protein sequence ID" value="ENSP00000389072.1"/>
    <property type="gene ID" value="ENSG00000234560.5"/>
</dbReference>
<dbReference type="Ensembl" id="ENST00000641224.2">
    <property type="protein sequence ID" value="ENSP00000493087.1"/>
    <property type="gene ID" value="ENSG00000234560.5"/>
</dbReference>
<dbReference type="GeneID" id="219869"/>
<dbReference type="KEGG" id="hsa:219869"/>
<dbReference type="MANE-Select" id="ENST00000641224.2">
    <property type="protein sequence ID" value="ENSP00000493087.1"/>
    <property type="RefSeq nucleotide sequence ID" value="NM_001004464.2"/>
    <property type="RefSeq protein sequence ID" value="NP_001004464.1"/>
</dbReference>
<dbReference type="UCSC" id="uc001pzp.2">
    <property type="organism name" value="human"/>
</dbReference>
<dbReference type="AGR" id="HGNC:14845"/>
<dbReference type="CTD" id="219869"/>
<dbReference type="GeneCards" id="OR10G8"/>
<dbReference type="HGNC" id="HGNC:14845">
    <property type="gene designation" value="OR10G8"/>
</dbReference>
<dbReference type="HPA" id="ENSG00000234560">
    <property type="expression patterns" value="Not detected"/>
</dbReference>
<dbReference type="neXtProt" id="NX_Q8NGN5"/>
<dbReference type="PharmGKB" id="PA31975"/>
<dbReference type="VEuPathDB" id="HostDB:ENSG00000234560"/>
<dbReference type="eggNOG" id="ENOG502SI4A">
    <property type="taxonomic scope" value="Eukaryota"/>
</dbReference>
<dbReference type="GeneTree" id="ENSGT01050000244869"/>
<dbReference type="HOGENOM" id="CLU_012526_8_1_1"/>
<dbReference type="InParanoid" id="Q8NGN5"/>
<dbReference type="OMA" id="SMMSGCS"/>
<dbReference type="OrthoDB" id="9045771at2759"/>
<dbReference type="PAN-GO" id="Q8NGN5">
    <property type="GO annotations" value="1 GO annotation based on evolutionary models"/>
</dbReference>
<dbReference type="PhylomeDB" id="Q8NGN5"/>
<dbReference type="TreeFam" id="TF337251"/>
<dbReference type="PathwayCommons" id="Q8NGN5"/>
<dbReference type="Reactome" id="R-HSA-9752946">
    <property type="pathway name" value="Expression and translocation of olfactory receptors"/>
</dbReference>
<dbReference type="BioGRID-ORCS" id="219869">
    <property type="hits" value="7 hits in 736 CRISPR screens"/>
</dbReference>
<dbReference type="GeneWiki" id="OR10G8"/>
<dbReference type="GenomeRNAi" id="219869"/>
<dbReference type="Pharos" id="Q8NGN5">
    <property type="development level" value="Tdark"/>
</dbReference>
<dbReference type="PRO" id="PR:Q8NGN5"/>
<dbReference type="Proteomes" id="UP000005640">
    <property type="component" value="Chromosome 11"/>
</dbReference>
<dbReference type="RNAct" id="Q8NGN5">
    <property type="molecule type" value="protein"/>
</dbReference>
<dbReference type="Bgee" id="ENSG00000234560">
    <property type="expression patterns" value="Expressed in primordial germ cell in gonad and 1 other cell type or tissue"/>
</dbReference>
<dbReference type="ExpressionAtlas" id="Q8NGN5">
    <property type="expression patterns" value="baseline and differential"/>
</dbReference>
<dbReference type="GO" id="GO:0005886">
    <property type="term" value="C:plasma membrane"/>
    <property type="evidence" value="ECO:0000318"/>
    <property type="project" value="GO_Central"/>
</dbReference>
<dbReference type="GO" id="GO:0004930">
    <property type="term" value="F:G protein-coupled receptor activity"/>
    <property type="evidence" value="ECO:0007669"/>
    <property type="project" value="UniProtKB-KW"/>
</dbReference>
<dbReference type="GO" id="GO:0004984">
    <property type="term" value="F:olfactory receptor activity"/>
    <property type="evidence" value="ECO:0000318"/>
    <property type="project" value="GO_Central"/>
</dbReference>
<dbReference type="GO" id="GO:0050911">
    <property type="term" value="P:detection of chemical stimulus involved in sensory perception of smell"/>
    <property type="evidence" value="ECO:0000318"/>
    <property type="project" value="GO_Central"/>
</dbReference>
<dbReference type="FunFam" id="1.10.1220.70:FF:000001">
    <property type="entry name" value="Olfactory receptor"/>
    <property type="match status" value="1"/>
</dbReference>
<dbReference type="FunFam" id="1.20.1070.10:FF:000001">
    <property type="entry name" value="Olfactory receptor"/>
    <property type="match status" value="1"/>
</dbReference>
<dbReference type="Gene3D" id="1.20.1070.10">
    <property type="entry name" value="Rhodopsin 7-helix transmembrane proteins"/>
    <property type="match status" value="1"/>
</dbReference>
<dbReference type="InterPro" id="IPR000276">
    <property type="entry name" value="GPCR_Rhodpsn"/>
</dbReference>
<dbReference type="InterPro" id="IPR017452">
    <property type="entry name" value="GPCR_Rhodpsn_7TM"/>
</dbReference>
<dbReference type="InterPro" id="IPR000725">
    <property type="entry name" value="Olfact_rcpt"/>
</dbReference>
<dbReference type="PANTHER" id="PTHR26453">
    <property type="entry name" value="OLFACTORY RECEPTOR"/>
    <property type="match status" value="1"/>
</dbReference>
<dbReference type="Pfam" id="PF13853">
    <property type="entry name" value="7tm_4"/>
    <property type="match status" value="1"/>
</dbReference>
<dbReference type="PRINTS" id="PR00237">
    <property type="entry name" value="GPCRRHODOPSN"/>
</dbReference>
<dbReference type="PRINTS" id="PR00245">
    <property type="entry name" value="OLFACTORYR"/>
</dbReference>
<dbReference type="SUPFAM" id="SSF81321">
    <property type="entry name" value="Family A G protein-coupled receptor-like"/>
    <property type="match status" value="1"/>
</dbReference>
<dbReference type="PROSITE" id="PS50262">
    <property type="entry name" value="G_PROTEIN_RECEP_F1_2"/>
    <property type="match status" value="1"/>
</dbReference>
<feature type="chain" id="PRO_0000150700" description="Olfactory receptor 10G8">
    <location>
        <begin position="1"/>
        <end position="311"/>
    </location>
</feature>
<feature type="topological domain" description="Extracellular" evidence="1">
    <location>
        <begin position="1"/>
        <end position="23"/>
    </location>
</feature>
<feature type="transmembrane region" description="Helical; Name=1" evidence="1">
    <location>
        <begin position="24"/>
        <end position="44"/>
    </location>
</feature>
<feature type="topological domain" description="Cytoplasmic" evidence="1">
    <location>
        <begin position="45"/>
        <end position="52"/>
    </location>
</feature>
<feature type="transmembrane region" description="Helical; Name=2" evidence="1">
    <location>
        <begin position="53"/>
        <end position="73"/>
    </location>
</feature>
<feature type="topological domain" description="Extracellular" evidence="1">
    <location>
        <begin position="74"/>
        <end position="98"/>
    </location>
</feature>
<feature type="transmembrane region" description="Helical; Name=3" evidence="1">
    <location>
        <begin position="99"/>
        <end position="119"/>
    </location>
</feature>
<feature type="topological domain" description="Cytoplasmic" evidence="1">
    <location>
        <begin position="120"/>
        <end position="138"/>
    </location>
</feature>
<feature type="transmembrane region" description="Helical; Name=4" evidence="1">
    <location>
        <begin position="139"/>
        <end position="159"/>
    </location>
</feature>
<feature type="topological domain" description="Extracellular" evidence="1">
    <location>
        <begin position="160"/>
        <end position="196"/>
    </location>
</feature>
<feature type="transmembrane region" description="Helical; Name=5" evidence="1">
    <location>
        <begin position="197"/>
        <end position="216"/>
    </location>
</feature>
<feature type="topological domain" description="Cytoplasmic" evidence="1">
    <location>
        <begin position="217"/>
        <end position="236"/>
    </location>
</feature>
<feature type="transmembrane region" description="Helical; Name=6" evidence="1">
    <location>
        <begin position="237"/>
        <end position="257"/>
    </location>
</feature>
<feature type="topological domain" description="Extracellular" evidence="1">
    <location>
        <begin position="258"/>
        <end position="268"/>
    </location>
</feature>
<feature type="transmembrane region" description="Helical; Name=7" evidence="1">
    <location>
        <begin position="269"/>
        <end position="289"/>
    </location>
</feature>
<feature type="topological domain" description="Cytoplasmic" evidence="1">
    <location>
        <begin position="290"/>
        <end position="311"/>
    </location>
</feature>
<feature type="glycosylation site" description="N-linked (GlcNAc...) asparagine" evidence="1">
    <location>
        <position position="3"/>
    </location>
</feature>
<feature type="disulfide bond" evidence="2">
    <location>
        <begin position="96"/>
        <end position="188"/>
    </location>
</feature>
<name>O10G8_HUMAN</name>
<accession>Q8NGN5</accession>
<accession>B2RNJ3</accession>
<accession>Q6IEV2</accession>
<organism>
    <name type="scientific">Homo sapiens</name>
    <name type="common">Human</name>
    <dbReference type="NCBI Taxonomy" id="9606"/>
    <lineage>
        <taxon>Eukaryota</taxon>
        <taxon>Metazoa</taxon>
        <taxon>Chordata</taxon>
        <taxon>Craniata</taxon>
        <taxon>Vertebrata</taxon>
        <taxon>Euteleostomi</taxon>
        <taxon>Mammalia</taxon>
        <taxon>Eutheria</taxon>
        <taxon>Euarchontoglires</taxon>
        <taxon>Primates</taxon>
        <taxon>Haplorrhini</taxon>
        <taxon>Catarrhini</taxon>
        <taxon>Hominidae</taxon>
        <taxon>Homo</taxon>
    </lineage>
</organism>
<comment type="function">
    <text evidence="3">Odorant receptor.</text>
</comment>
<comment type="subcellular location">
    <subcellularLocation>
        <location>Cell membrane</location>
        <topology>Multi-pass membrane protein</topology>
    </subcellularLocation>
</comment>
<comment type="similarity">
    <text evidence="2">Belongs to the G-protein coupled receptor 1 family.</text>
</comment>
<comment type="online information" name="Human Olfactory Receptor Data Exploratorium (HORDE)">
    <link uri="http://genome.weizmann.ac.il/horde/card/index/symbol:OR10G8"/>
</comment>
<proteinExistence type="evidence at transcript level"/>
<protein>
    <recommendedName>
        <fullName>Olfactory receptor 10G8</fullName>
    </recommendedName>
    <alternativeName>
        <fullName>Olfactory receptor OR11-282</fullName>
    </alternativeName>
</protein>
<gene>
    <name type="primary">OR10G8</name>
</gene>
<sequence>MSNASLLTAFILMGLPHAPALDAPLFGVFLVVYVLTVLGNLLILLVIRVDSHLHTTMYYFLTNLSFIDMWFSTVTVPKLLMTLVFPSGRAISFHSCMAQLYFFHFLGGTECFLYRVMSCDRYLAISYPLRYTSMMTGRSCTLLATSTWLSGSLHSAVQAILTFHLPYCGPNWIQHYLCDAPPILKLACADTSAIETVIFVTVGIVASGCFVLIVLSYVSIVCSILRIRTSEGKHRAFQTCASHCIVVLCFFGPGLFIYLRPGSRKAVDGVVAVFYTVLTPLLNPVVYTLRNKEVKKALLKLKDKVAHSQSK</sequence>
<reference key="1">
    <citation type="submission" date="2001-07" db="EMBL/GenBank/DDBJ databases">
        <title>Genome-wide discovery and analysis of human seven transmembrane helix receptor genes.</title>
        <authorList>
            <person name="Suwa M."/>
            <person name="Sato T."/>
            <person name="Okouchi I."/>
            <person name="Arita M."/>
            <person name="Futami K."/>
            <person name="Matsumoto S."/>
            <person name="Tsutsumi S."/>
            <person name="Aburatani H."/>
            <person name="Asai K."/>
            <person name="Akiyama Y."/>
        </authorList>
    </citation>
    <scope>NUCLEOTIDE SEQUENCE [GENOMIC DNA]</scope>
</reference>
<reference key="2">
    <citation type="submission" date="2005-07" db="EMBL/GenBank/DDBJ databases">
        <authorList>
            <person name="Mural R.J."/>
            <person name="Istrail S."/>
            <person name="Sutton G.G."/>
            <person name="Florea L."/>
            <person name="Halpern A.L."/>
            <person name="Mobarry C.M."/>
            <person name="Lippert R."/>
            <person name="Walenz B."/>
            <person name="Shatkay H."/>
            <person name="Dew I."/>
            <person name="Miller J.R."/>
            <person name="Flanigan M.J."/>
            <person name="Edwards N.J."/>
            <person name="Bolanos R."/>
            <person name="Fasulo D."/>
            <person name="Halldorsson B.V."/>
            <person name="Hannenhalli S."/>
            <person name="Turner R."/>
            <person name="Yooseph S."/>
            <person name="Lu F."/>
            <person name="Nusskern D.R."/>
            <person name="Shue B.C."/>
            <person name="Zheng X.H."/>
            <person name="Zhong F."/>
            <person name="Delcher A.L."/>
            <person name="Huson D.H."/>
            <person name="Kravitz S.A."/>
            <person name="Mouchard L."/>
            <person name="Reinert K."/>
            <person name="Remington K.A."/>
            <person name="Clark A.G."/>
            <person name="Waterman M.S."/>
            <person name="Eichler E.E."/>
            <person name="Adams M.D."/>
            <person name="Hunkapiller M.W."/>
            <person name="Myers E.W."/>
            <person name="Venter J.C."/>
        </authorList>
    </citation>
    <scope>NUCLEOTIDE SEQUENCE [LARGE SCALE GENOMIC DNA]</scope>
</reference>
<reference key="3">
    <citation type="journal article" date="2004" name="Genome Res.">
        <title>The status, quality, and expansion of the NIH full-length cDNA project: the Mammalian Gene Collection (MGC).</title>
        <authorList>
            <consortium name="The MGC Project Team"/>
        </authorList>
    </citation>
    <scope>NUCLEOTIDE SEQUENCE [LARGE SCALE MRNA]</scope>
</reference>
<reference key="4">
    <citation type="journal article" date="2004" name="Proc. Natl. Acad. Sci. U.S.A.">
        <title>The human olfactory receptor gene family.</title>
        <authorList>
            <person name="Malnic B."/>
            <person name="Godfrey P.A."/>
            <person name="Buck L.B."/>
        </authorList>
    </citation>
    <scope>IDENTIFICATION</scope>
</reference>
<reference key="5">
    <citation type="journal article" date="2004" name="Proc. Natl. Acad. Sci. U.S.A.">
        <authorList>
            <person name="Malnic B."/>
            <person name="Godfrey P.A."/>
            <person name="Buck L.B."/>
        </authorList>
    </citation>
    <scope>ERRATUM OF PUBMED:14983052</scope>
</reference>
<keyword id="KW-1003">Cell membrane</keyword>
<keyword id="KW-1015">Disulfide bond</keyword>
<keyword id="KW-0297">G-protein coupled receptor</keyword>
<keyword id="KW-0325">Glycoprotein</keyword>
<keyword id="KW-0472">Membrane</keyword>
<keyword id="KW-0552">Olfaction</keyword>
<keyword id="KW-0675">Receptor</keyword>
<keyword id="KW-1185">Reference proteome</keyword>
<keyword id="KW-0716">Sensory transduction</keyword>
<keyword id="KW-0807">Transducer</keyword>
<keyword id="KW-0812">Transmembrane</keyword>
<keyword id="KW-1133">Transmembrane helix</keyword>
<evidence type="ECO:0000255" key="1"/>
<evidence type="ECO:0000255" key="2">
    <source>
        <dbReference type="PROSITE-ProRule" id="PRU00521"/>
    </source>
</evidence>
<evidence type="ECO:0000305" key="3"/>